<reference key="1">
    <citation type="journal article" date="2000" name="Nature">
        <title>Sequence and analysis of chromosome 1 of the plant Arabidopsis thaliana.</title>
        <authorList>
            <person name="Theologis A."/>
            <person name="Ecker J.R."/>
            <person name="Palm C.J."/>
            <person name="Federspiel N.A."/>
            <person name="Kaul S."/>
            <person name="White O."/>
            <person name="Alonso J."/>
            <person name="Altafi H."/>
            <person name="Araujo R."/>
            <person name="Bowman C.L."/>
            <person name="Brooks S.Y."/>
            <person name="Buehler E."/>
            <person name="Chan A."/>
            <person name="Chao Q."/>
            <person name="Chen H."/>
            <person name="Cheuk R.F."/>
            <person name="Chin C.W."/>
            <person name="Chung M.K."/>
            <person name="Conn L."/>
            <person name="Conway A.B."/>
            <person name="Conway A.R."/>
            <person name="Creasy T.H."/>
            <person name="Dewar K."/>
            <person name="Dunn P."/>
            <person name="Etgu P."/>
            <person name="Feldblyum T.V."/>
            <person name="Feng J.-D."/>
            <person name="Fong B."/>
            <person name="Fujii C.Y."/>
            <person name="Gill J.E."/>
            <person name="Goldsmith A.D."/>
            <person name="Haas B."/>
            <person name="Hansen N.F."/>
            <person name="Hughes B."/>
            <person name="Huizar L."/>
            <person name="Hunter J.L."/>
            <person name="Jenkins J."/>
            <person name="Johnson-Hopson C."/>
            <person name="Khan S."/>
            <person name="Khaykin E."/>
            <person name="Kim C.J."/>
            <person name="Koo H.L."/>
            <person name="Kremenetskaia I."/>
            <person name="Kurtz D.B."/>
            <person name="Kwan A."/>
            <person name="Lam B."/>
            <person name="Langin-Hooper S."/>
            <person name="Lee A."/>
            <person name="Lee J.M."/>
            <person name="Lenz C.A."/>
            <person name="Li J.H."/>
            <person name="Li Y.-P."/>
            <person name="Lin X."/>
            <person name="Liu S.X."/>
            <person name="Liu Z.A."/>
            <person name="Luros J.S."/>
            <person name="Maiti R."/>
            <person name="Marziali A."/>
            <person name="Militscher J."/>
            <person name="Miranda M."/>
            <person name="Nguyen M."/>
            <person name="Nierman W.C."/>
            <person name="Osborne B.I."/>
            <person name="Pai G."/>
            <person name="Peterson J."/>
            <person name="Pham P.K."/>
            <person name="Rizzo M."/>
            <person name="Rooney T."/>
            <person name="Rowley D."/>
            <person name="Sakano H."/>
            <person name="Salzberg S.L."/>
            <person name="Schwartz J.R."/>
            <person name="Shinn P."/>
            <person name="Southwick A.M."/>
            <person name="Sun H."/>
            <person name="Tallon L.J."/>
            <person name="Tambunga G."/>
            <person name="Toriumi M.J."/>
            <person name="Town C.D."/>
            <person name="Utterback T."/>
            <person name="Van Aken S."/>
            <person name="Vaysberg M."/>
            <person name="Vysotskaia V.S."/>
            <person name="Walker M."/>
            <person name="Wu D."/>
            <person name="Yu G."/>
            <person name="Fraser C.M."/>
            <person name="Venter J.C."/>
            <person name="Davis R.W."/>
        </authorList>
    </citation>
    <scope>NUCLEOTIDE SEQUENCE [LARGE SCALE GENOMIC DNA]</scope>
    <source>
        <strain>cv. Columbia</strain>
    </source>
</reference>
<reference key="2">
    <citation type="journal article" date="2017" name="Plant J.">
        <title>Araport11: a complete reannotation of the Arabidopsis thaliana reference genome.</title>
        <authorList>
            <person name="Cheng C.Y."/>
            <person name="Krishnakumar V."/>
            <person name="Chan A.P."/>
            <person name="Thibaud-Nissen F."/>
            <person name="Schobel S."/>
            <person name="Town C.D."/>
        </authorList>
    </citation>
    <scope>GENOME REANNOTATION</scope>
    <source>
        <strain>cv. Columbia</strain>
    </source>
</reference>
<reference key="3">
    <citation type="journal article" date="2003" name="Science">
        <title>Empirical analysis of transcriptional activity in the Arabidopsis genome.</title>
        <authorList>
            <person name="Yamada K."/>
            <person name="Lim J."/>
            <person name="Dale J.M."/>
            <person name="Chen H."/>
            <person name="Shinn P."/>
            <person name="Palm C.J."/>
            <person name="Southwick A.M."/>
            <person name="Wu H.C."/>
            <person name="Kim C.J."/>
            <person name="Nguyen M."/>
            <person name="Pham P.K."/>
            <person name="Cheuk R.F."/>
            <person name="Karlin-Newmann G."/>
            <person name="Liu S.X."/>
            <person name="Lam B."/>
            <person name="Sakano H."/>
            <person name="Wu T."/>
            <person name="Yu G."/>
            <person name="Miranda M."/>
            <person name="Quach H.L."/>
            <person name="Tripp M."/>
            <person name="Chang C.H."/>
            <person name="Lee J.M."/>
            <person name="Toriumi M.J."/>
            <person name="Chan M.M."/>
            <person name="Tang C.C."/>
            <person name="Onodera C.S."/>
            <person name="Deng J.M."/>
            <person name="Akiyama K."/>
            <person name="Ansari Y."/>
            <person name="Arakawa T."/>
            <person name="Banh J."/>
            <person name="Banno F."/>
            <person name="Bowser L."/>
            <person name="Brooks S.Y."/>
            <person name="Carninci P."/>
            <person name="Chao Q."/>
            <person name="Choy N."/>
            <person name="Enju A."/>
            <person name="Goldsmith A.D."/>
            <person name="Gurjal M."/>
            <person name="Hansen N.F."/>
            <person name="Hayashizaki Y."/>
            <person name="Johnson-Hopson C."/>
            <person name="Hsuan V.W."/>
            <person name="Iida K."/>
            <person name="Karnes M."/>
            <person name="Khan S."/>
            <person name="Koesema E."/>
            <person name="Ishida J."/>
            <person name="Jiang P.X."/>
            <person name="Jones T."/>
            <person name="Kawai J."/>
            <person name="Kamiya A."/>
            <person name="Meyers C."/>
            <person name="Nakajima M."/>
            <person name="Narusaka M."/>
            <person name="Seki M."/>
            <person name="Sakurai T."/>
            <person name="Satou M."/>
            <person name="Tamse R."/>
            <person name="Vaysberg M."/>
            <person name="Wallender E.K."/>
            <person name="Wong C."/>
            <person name="Yamamura Y."/>
            <person name="Yuan S."/>
            <person name="Shinozaki K."/>
            <person name="Davis R.W."/>
            <person name="Theologis A."/>
            <person name="Ecker J.R."/>
        </authorList>
    </citation>
    <scope>NUCLEOTIDE SEQUENCE [LARGE SCALE MRNA]</scope>
    <source>
        <strain>cv. Columbia</strain>
    </source>
</reference>
<reference key="4">
    <citation type="submission" date="2002-03" db="EMBL/GenBank/DDBJ databases">
        <title>Full-length cDNA from Arabidopsis thaliana.</title>
        <authorList>
            <person name="Brover V.V."/>
            <person name="Troukhan M.E."/>
            <person name="Alexandrov N.A."/>
            <person name="Lu Y.-P."/>
            <person name="Flavell R.B."/>
            <person name="Feldmann K.A."/>
        </authorList>
    </citation>
    <scope>NUCLEOTIDE SEQUENCE [LARGE SCALE MRNA]</scope>
</reference>
<reference key="5">
    <citation type="journal article" date="2013" name="Plant Cell">
        <title>Light-regulated hypocotyl elongation involves proteasome-dependent degradation of the microtubule regulatory protein WDL3 in Arabidopsis.</title>
        <authorList>
            <person name="Liu X."/>
            <person name="Qin T."/>
            <person name="Ma Q."/>
            <person name="Sun J."/>
            <person name="Liu Z."/>
            <person name="Yuan M."/>
            <person name="Mao T."/>
        </authorList>
    </citation>
    <scope>TISSUE SPECIFICITY</scope>
</reference>
<proteinExistence type="evidence at transcript level"/>
<accession>Q9ASW8</accession>
<accession>Q8LES4</accession>
<accession>Q9SLI7</accession>
<evidence type="ECO:0000250" key="1">
    <source>
        <dbReference type="UniProtKB" id="Q8GYX9"/>
    </source>
</evidence>
<evidence type="ECO:0000255" key="2"/>
<evidence type="ECO:0000256" key="3">
    <source>
        <dbReference type="SAM" id="MobiDB-lite"/>
    </source>
</evidence>
<evidence type="ECO:0000269" key="4">
    <source>
    </source>
</evidence>
<evidence type="ECO:0000303" key="5">
    <source>
    </source>
</evidence>
<evidence type="ECO:0000305" key="6"/>
<evidence type="ECO:0000312" key="7">
    <source>
        <dbReference type="Araport" id="AT1G54460"/>
    </source>
</evidence>
<evidence type="ECO:0000312" key="8">
    <source>
        <dbReference type="EMBL" id="AAD25625.1"/>
    </source>
</evidence>
<organism>
    <name type="scientific">Arabidopsis thaliana</name>
    <name type="common">Mouse-ear cress</name>
    <dbReference type="NCBI Taxonomy" id="3702"/>
    <lineage>
        <taxon>Eukaryota</taxon>
        <taxon>Viridiplantae</taxon>
        <taxon>Streptophyta</taxon>
        <taxon>Embryophyta</taxon>
        <taxon>Tracheophyta</taxon>
        <taxon>Spermatophyta</taxon>
        <taxon>Magnoliopsida</taxon>
        <taxon>eudicotyledons</taxon>
        <taxon>Gunneridae</taxon>
        <taxon>Pentapetalae</taxon>
        <taxon>rosids</taxon>
        <taxon>malvids</taxon>
        <taxon>Brassicales</taxon>
        <taxon>Brassicaceae</taxon>
        <taxon>Camelineae</taxon>
        <taxon>Arabidopsis</taxon>
    </lineage>
</organism>
<comment type="function">
    <text evidence="1">Microtubule-associated protein (MAP) that regulates the orientation of interphase cortical microtubules.</text>
</comment>
<comment type="subcellular location">
    <subcellularLocation>
        <location evidence="1">Cytoplasm</location>
        <location evidence="1">Cytoskeleton</location>
    </subcellularLocation>
</comment>
<comment type="tissue specificity">
    <text evidence="4">Expressed in seedlings.</text>
</comment>
<comment type="similarity">
    <text evidence="6">Belongs to the TPX2 family.</text>
</comment>
<comment type="sequence caution" evidence="6">
    <conflict type="erroneous gene model prediction">
        <sequence resource="EMBL-CDS" id="AAD25625"/>
    </conflict>
</comment>
<keyword id="KW-0175">Coiled coil</keyword>
<keyword id="KW-0963">Cytoplasm</keyword>
<keyword id="KW-0206">Cytoskeleton</keyword>
<keyword id="KW-0493">Microtubule</keyword>
<keyword id="KW-1185">Reference proteome</keyword>
<name>WDL2_ARATH</name>
<dbReference type="EMBL" id="AC005287">
    <property type="protein sequence ID" value="AAD25625.1"/>
    <property type="status" value="ALT_SEQ"/>
    <property type="molecule type" value="Genomic_DNA"/>
</dbReference>
<dbReference type="EMBL" id="CP002684">
    <property type="protein sequence ID" value="AEE33106.1"/>
    <property type="molecule type" value="Genomic_DNA"/>
</dbReference>
<dbReference type="EMBL" id="AF361626">
    <property type="protein sequence ID" value="AAK32794.1"/>
    <property type="molecule type" value="mRNA"/>
</dbReference>
<dbReference type="EMBL" id="AY055093">
    <property type="protein sequence ID" value="AAL05893.1"/>
    <property type="molecule type" value="mRNA"/>
</dbReference>
<dbReference type="EMBL" id="AY085262">
    <property type="protein sequence ID" value="AAM62494.1"/>
    <property type="molecule type" value="mRNA"/>
</dbReference>
<dbReference type="PIR" id="E96586">
    <property type="entry name" value="E96586"/>
</dbReference>
<dbReference type="RefSeq" id="NP_564659.1">
    <property type="nucleotide sequence ID" value="NM_104324.4"/>
</dbReference>
<dbReference type="SMR" id="Q9ASW8"/>
<dbReference type="FunCoup" id="Q9ASW8">
    <property type="interactions" value="157"/>
</dbReference>
<dbReference type="STRING" id="3702.Q9ASW8"/>
<dbReference type="iPTMnet" id="Q9ASW8"/>
<dbReference type="PaxDb" id="3702-AT1G54460.1"/>
<dbReference type="ProteomicsDB" id="242745"/>
<dbReference type="DNASU" id="841888"/>
<dbReference type="EnsemblPlants" id="AT1G54460.1">
    <property type="protein sequence ID" value="AT1G54460.1"/>
    <property type="gene ID" value="AT1G54460"/>
</dbReference>
<dbReference type="GeneID" id="841888"/>
<dbReference type="Gramene" id="AT1G54460.1">
    <property type="protein sequence ID" value="AT1G54460.1"/>
    <property type="gene ID" value="AT1G54460"/>
</dbReference>
<dbReference type="KEGG" id="ath:AT1G54460"/>
<dbReference type="Araport" id="AT1G54460"/>
<dbReference type="TAIR" id="AT1G54460"/>
<dbReference type="eggNOG" id="ENOG502RERJ">
    <property type="taxonomic scope" value="Eukaryota"/>
</dbReference>
<dbReference type="HOGENOM" id="CLU_042861_2_0_1"/>
<dbReference type="InParanoid" id="Q9ASW8"/>
<dbReference type="OMA" id="KYIMFSS"/>
<dbReference type="PhylomeDB" id="Q9ASW8"/>
<dbReference type="CD-CODE" id="4299E36E">
    <property type="entry name" value="Nucleolus"/>
</dbReference>
<dbReference type="PRO" id="PR:Q9ASW8"/>
<dbReference type="Proteomes" id="UP000006548">
    <property type="component" value="Chromosome 1"/>
</dbReference>
<dbReference type="ExpressionAtlas" id="Q9ASW8">
    <property type="expression patterns" value="baseline and differential"/>
</dbReference>
<dbReference type="GO" id="GO:0005737">
    <property type="term" value="C:cytoplasm"/>
    <property type="evidence" value="ECO:0007669"/>
    <property type="project" value="UniProtKB-KW"/>
</dbReference>
<dbReference type="GO" id="GO:0005874">
    <property type="term" value="C:microtubule"/>
    <property type="evidence" value="ECO:0007669"/>
    <property type="project" value="UniProtKB-KW"/>
</dbReference>
<dbReference type="GO" id="GO:0008017">
    <property type="term" value="F:microtubule binding"/>
    <property type="evidence" value="ECO:0007669"/>
    <property type="project" value="InterPro"/>
</dbReference>
<dbReference type="GO" id="GO:0000226">
    <property type="term" value="P:microtubule cytoskeleton organization"/>
    <property type="evidence" value="ECO:0007669"/>
    <property type="project" value="InterPro"/>
</dbReference>
<dbReference type="InterPro" id="IPR027329">
    <property type="entry name" value="TPX2_C"/>
</dbReference>
<dbReference type="InterPro" id="IPR044806">
    <property type="entry name" value="WVD2/WDL1-4"/>
</dbReference>
<dbReference type="PANTHER" id="PTHR46372:SF14">
    <property type="entry name" value="PROTEIN WVD2-LIKE 2"/>
    <property type="match status" value="1"/>
</dbReference>
<dbReference type="PANTHER" id="PTHR46372">
    <property type="entry name" value="PROTEIN WVD2-LIKE 3"/>
    <property type="match status" value="1"/>
</dbReference>
<dbReference type="Pfam" id="PF06886">
    <property type="entry name" value="TPX2"/>
    <property type="match status" value="1"/>
</dbReference>
<protein>
    <recommendedName>
        <fullName evidence="6">Protein WVD2-like 2</fullName>
    </recommendedName>
</protein>
<sequence length="338" mass="37399">MGRELVDKHMDKKANSLTASSTGSSDDNKVPSPSTNEAAEVKECTEQNLVADDARLRQQGITETPGSHKSSVKPRVTAKTTVPKPFSLSAEKPRRAAVDNNSLGNGASHNSSSASRVSQLNSPLPTRRIPDHKMHHDEEDSFSVASSSATSIRSFKPKITIGVAPTFSSTSRLERRREFYQKLEEKQKALEAEKRENEKRLKEEQEAVTKQLRKNMAYKANPVPSFYQEGPPPKQPLKKFPLTRPKSPNLNRRKSCSDTVNASYQEVKGKHCARHRHSVGGCKDEVKTNSVPRTPNSSSKDQMRKSKKGTPKSEEVHEMFNSGHDGETGENGVGVVEE</sequence>
<gene>
    <name evidence="5" type="primary">WDL2</name>
    <name evidence="7" type="ordered locus">At1g54460</name>
    <name evidence="8" type="ORF">F20D21.28</name>
</gene>
<feature type="chain" id="PRO_0000435674" description="Protein WVD2-like 2">
    <location>
        <begin position="1"/>
        <end position="338"/>
    </location>
</feature>
<feature type="region of interest" description="Disordered" evidence="3">
    <location>
        <begin position="1"/>
        <end position="150"/>
    </location>
</feature>
<feature type="region of interest" description="Disordered" evidence="3">
    <location>
        <begin position="222"/>
        <end position="338"/>
    </location>
</feature>
<feature type="coiled-coil region" evidence="2">
    <location>
        <begin position="177"/>
        <end position="214"/>
    </location>
</feature>
<feature type="compositionally biased region" description="Basic and acidic residues" evidence="3">
    <location>
        <begin position="1"/>
        <end position="14"/>
    </location>
</feature>
<feature type="compositionally biased region" description="Polar residues" evidence="3">
    <location>
        <begin position="15"/>
        <end position="37"/>
    </location>
</feature>
<feature type="compositionally biased region" description="Polar residues" evidence="3">
    <location>
        <begin position="59"/>
        <end position="69"/>
    </location>
</feature>
<feature type="compositionally biased region" description="Low complexity" evidence="3">
    <location>
        <begin position="100"/>
        <end position="115"/>
    </location>
</feature>
<feature type="compositionally biased region" description="Basic and acidic residues" evidence="3">
    <location>
        <begin position="128"/>
        <end position="138"/>
    </location>
</feature>
<feature type="compositionally biased region" description="Polar residues" evidence="3">
    <location>
        <begin position="288"/>
        <end position="300"/>
    </location>
</feature>
<feature type="sequence conflict" description="In Ref. 4; AAM62494." evidence="6" ref="4">
    <original>V</original>
    <variation>A</variation>
    <location>
        <position position="76"/>
    </location>
</feature>
<feature type="sequence conflict" description="In Ref. 4; AAM62494." evidence="6" ref="4">
    <original>G</original>
    <variation>D</variation>
    <location>
        <position position="332"/>
    </location>
</feature>